<keyword id="KW-0963">Cytoplasm</keyword>
<keyword id="KW-0223">Dioxygenase</keyword>
<keyword id="KW-0408">Iron</keyword>
<keyword id="KW-0479">Metal-binding</keyword>
<keyword id="KW-0560">Oxidoreductase</keyword>
<keyword id="KW-0662">Pyridine nucleotide biosynthesis</keyword>
<keyword id="KW-1185">Reference proteome</keyword>
<accession>A2R8S7</accession>
<gene>
    <name type="primary">bna1</name>
    <name type="ORF">An16g08210</name>
</gene>
<organism>
    <name type="scientific">Aspergillus niger (strain ATCC MYA-4892 / CBS 513.88 / FGSC A1513)</name>
    <dbReference type="NCBI Taxonomy" id="425011"/>
    <lineage>
        <taxon>Eukaryota</taxon>
        <taxon>Fungi</taxon>
        <taxon>Dikarya</taxon>
        <taxon>Ascomycota</taxon>
        <taxon>Pezizomycotina</taxon>
        <taxon>Eurotiomycetes</taxon>
        <taxon>Eurotiomycetidae</taxon>
        <taxon>Eurotiales</taxon>
        <taxon>Aspergillaceae</taxon>
        <taxon>Aspergillus</taxon>
        <taxon>Aspergillus subgen. Circumdati</taxon>
    </lineage>
</organism>
<sequence length="189" mass="21338">MLPPALNIPKWLETNSHLLQPPVNNYCVYHPSSPATQGYTVMIVGGPNARTDYHINTTPEFFYQYKGSMLLRTVDESSTPPTFQDIPIHEGSLFLLPANTPHCPVRFKDTVGVVMEQPRKEGAVDAMRWYCRNKDCGKVVWEKRFVCTDLGTQVKQVVEEFAGDEEKRTCKACGVVARSKYEEGEVVQP</sequence>
<evidence type="ECO:0000255" key="1">
    <source>
        <dbReference type="HAMAP-Rule" id="MF_03019"/>
    </source>
</evidence>
<feature type="chain" id="PRO_0000361980" description="3-hydroxyanthranilate 3,4-dioxygenase">
    <location>
        <begin position="1"/>
        <end position="189"/>
    </location>
</feature>
<feature type="binding site" evidence="1">
    <location>
        <position position="50"/>
    </location>
    <ligand>
        <name>O2</name>
        <dbReference type="ChEBI" id="CHEBI:15379"/>
    </ligand>
</feature>
<feature type="binding site" evidence="1">
    <location>
        <position position="54"/>
    </location>
    <ligand>
        <name>Fe cation</name>
        <dbReference type="ChEBI" id="CHEBI:24875"/>
        <note>catalytic</note>
    </ligand>
</feature>
<feature type="binding site" evidence="1">
    <location>
        <position position="60"/>
    </location>
    <ligand>
        <name>Fe cation</name>
        <dbReference type="ChEBI" id="CHEBI:24875"/>
        <note>catalytic</note>
    </ligand>
</feature>
<feature type="binding site" evidence="1">
    <location>
        <position position="60"/>
    </location>
    <ligand>
        <name>substrate</name>
    </ligand>
</feature>
<feature type="binding site" evidence="1">
    <location>
        <position position="102"/>
    </location>
    <ligand>
        <name>Fe cation</name>
        <dbReference type="ChEBI" id="CHEBI:24875"/>
        <note>catalytic</note>
    </ligand>
</feature>
<feature type="binding site" evidence="1">
    <location>
        <position position="106"/>
    </location>
    <ligand>
        <name>substrate</name>
    </ligand>
</feature>
<feature type="binding site" evidence="1">
    <location>
        <position position="116"/>
    </location>
    <ligand>
        <name>substrate</name>
    </ligand>
</feature>
<feature type="binding site" evidence="1">
    <location>
        <position position="131"/>
    </location>
    <ligand>
        <name>a divalent metal cation</name>
        <dbReference type="ChEBI" id="CHEBI:60240"/>
    </ligand>
</feature>
<feature type="binding site" evidence="1">
    <location>
        <position position="136"/>
    </location>
    <ligand>
        <name>a divalent metal cation</name>
        <dbReference type="ChEBI" id="CHEBI:60240"/>
    </ligand>
</feature>
<feature type="binding site" evidence="1">
    <location>
        <position position="170"/>
    </location>
    <ligand>
        <name>a divalent metal cation</name>
        <dbReference type="ChEBI" id="CHEBI:60240"/>
    </ligand>
</feature>
<feature type="binding site" evidence="1">
    <location>
        <position position="173"/>
    </location>
    <ligand>
        <name>a divalent metal cation</name>
        <dbReference type="ChEBI" id="CHEBI:60240"/>
    </ligand>
</feature>
<protein>
    <recommendedName>
        <fullName evidence="1">3-hydroxyanthranilate 3,4-dioxygenase</fullName>
        <ecNumber evidence="1">1.13.11.6</ecNumber>
    </recommendedName>
    <alternativeName>
        <fullName evidence="1">3-hydroxyanthranilate oxygenase</fullName>
        <shortName evidence="1">3-HAO</shortName>
    </alternativeName>
    <alternativeName>
        <fullName evidence="1">3-hydroxyanthranilic acid dioxygenase</fullName>
        <shortName evidence="1">HAD</shortName>
    </alternativeName>
    <alternativeName>
        <fullName evidence="1">Biosynthesis of nicotinic acid protein 1</fullName>
    </alternativeName>
</protein>
<reference key="1">
    <citation type="journal article" date="2007" name="Nat. Biotechnol.">
        <title>Genome sequencing and analysis of the versatile cell factory Aspergillus niger CBS 513.88.</title>
        <authorList>
            <person name="Pel H.J."/>
            <person name="de Winde J.H."/>
            <person name="Archer D.B."/>
            <person name="Dyer P.S."/>
            <person name="Hofmann G."/>
            <person name="Schaap P.J."/>
            <person name="Turner G."/>
            <person name="de Vries R.P."/>
            <person name="Albang R."/>
            <person name="Albermann K."/>
            <person name="Andersen M.R."/>
            <person name="Bendtsen J.D."/>
            <person name="Benen J.A.E."/>
            <person name="van den Berg M."/>
            <person name="Breestraat S."/>
            <person name="Caddick M.X."/>
            <person name="Contreras R."/>
            <person name="Cornell M."/>
            <person name="Coutinho P.M."/>
            <person name="Danchin E.G.J."/>
            <person name="Debets A.J.M."/>
            <person name="Dekker P."/>
            <person name="van Dijck P.W.M."/>
            <person name="van Dijk A."/>
            <person name="Dijkhuizen L."/>
            <person name="Driessen A.J.M."/>
            <person name="d'Enfert C."/>
            <person name="Geysens S."/>
            <person name="Goosen C."/>
            <person name="Groot G.S.P."/>
            <person name="de Groot P.W.J."/>
            <person name="Guillemette T."/>
            <person name="Henrissat B."/>
            <person name="Herweijer M."/>
            <person name="van den Hombergh J.P.T.W."/>
            <person name="van den Hondel C.A.M.J.J."/>
            <person name="van der Heijden R.T.J.M."/>
            <person name="van der Kaaij R.M."/>
            <person name="Klis F.M."/>
            <person name="Kools H.J."/>
            <person name="Kubicek C.P."/>
            <person name="van Kuyk P.A."/>
            <person name="Lauber J."/>
            <person name="Lu X."/>
            <person name="van der Maarel M.J.E.C."/>
            <person name="Meulenberg R."/>
            <person name="Menke H."/>
            <person name="Mortimer M.A."/>
            <person name="Nielsen J."/>
            <person name="Oliver S.G."/>
            <person name="Olsthoorn M."/>
            <person name="Pal K."/>
            <person name="van Peij N.N.M.E."/>
            <person name="Ram A.F.J."/>
            <person name="Rinas U."/>
            <person name="Roubos J.A."/>
            <person name="Sagt C.M.J."/>
            <person name="Schmoll M."/>
            <person name="Sun J."/>
            <person name="Ussery D."/>
            <person name="Varga J."/>
            <person name="Vervecken W."/>
            <person name="van de Vondervoort P.J.J."/>
            <person name="Wedler H."/>
            <person name="Woesten H.A.B."/>
            <person name="Zeng A.-P."/>
            <person name="van Ooyen A.J.J."/>
            <person name="Visser J."/>
            <person name="Stam H."/>
        </authorList>
    </citation>
    <scope>NUCLEOTIDE SEQUENCE [LARGE SCALE GENOMIC DNA]</scope>
    <source>
        <strain>ATCC MYA-4892 / CBS 513.88 / FGSC A1513</strain>
    </source>
</reference>
<name>3HAO_ASPNC</name>
<proteinExistence type="inferred from homology"/>
<dbReference type="EC" id="1.13.11.6" evidence="1"/>
<dbReference type="EMBL" id="AM270377">
    <property type="protein sequence ID" value="CAK47070.1"/>
    <property type="molecule type" value="Genomic_DNA"/>
</dbReference>
<dbReference type="RefSeq" id="XP_001398119.1">
    <property type="nucleotide sequence ID" value="XM_001398082.1"/>
</dbReference>
<dbReference type="SMR" id="A2R8S7"/>
<dbReference type="EnsemblFungi" id="CAK47070">
    <property type="protein sequence ID" value="CAK47070"/>
    <property type="gene ID" value="An16g08210"/>
</dbReference>
<dbReference type="GeneID" id="4989212"/>
<dbReference type="KEGG" id="ang:An16g08210"/>
<dbReference type="VEuPathDB" id="FungiDB:An16g08210"/>
<dbReference type="HOGENOM" id="CLU_095765_0_0_1"/>
<dbReference type="UniPathway" id="UPA00253">
    <property type="reaction ID" value="UER00330"/>
</dbReference>
<dbReference type="Proteomes" id="UP000006706">
    <property type="component" value="Chromosome 5R"/>
</dbReference>
<dbReference type="GO" id="GO:0005737">
    <property type="term" value="C:cytoplasm"/>
    <property type="evidence" value="ECO:0007669"/>
    <property type="project" value="UniProtKB-SubCell"/>
</dbReference>
<dbReference type="GO" id="GO:0000334">
    <property type="term" value="F:3-hydroxyanthranilate 3,4-dioxygenase activity"/>
    <property type="evidence" value="ECO:0007669"/>
    <property type="project" value="UniProtKB-UniRule"/>
</dbReference>
<dbReference type="GO" id="GO:0008198">
    <property type="term" value="F:ferrous iron binding"/>
    <property type="evidence" value="ECO:0007669"/>
    <property type="project" value="UniProtKB-UniRule"/>
</dbReference>
<dbReference type="GO" id="GO:0034354">
    <property type="term" value="P:'de novo' NAD biosynthetic process from L-tryptophan"/>
    <property type="evidence" value="ECO:0007669"/>
    <property type="project" value="UniProtKB-UniRule"/>
</dbReference>
<dbReference type="GO" id="GO:0043420">
    <property type="term" value="P:anthranilate metabolic process"/>
    <property type="evidence" value="ECO:0007669"/>
    <property type="project" value="UniProtKB-UniRule"/>
</dbReference>
<dbReference type="GO" id="GO:0006569">
    <property type="term" value="P:L-tryptophan catabolic process"/>
    <property type="evidence" value="ECO:0007669"/>
    <property type="project" value="UniProtKB-UniRule"/>
</dbReference>
<dbReference type="GO" id="GO:0019805">
    <property type="term" value="P:quinolinate biosynthetic process"/>
    <property type="evidence" value="ECO:0007669"/>
    <property type="project" value="UniProtKB-UniRule"/>
</dbReference>
<dbReference type="CDD" id="cd06123">
    <property type="entry name" value="cupin_HAO"/>
    <property type="match status" value="1"/>
</dbReference>
<dbReference type="FunFam" id="2.60.120.10:FF:000093">
    <property type="entry name" value="3-hydroxyanthranilate 3,4-dioxygenase"/>
    <property type="match status" value="1"/>
</dbReference>
<dbReference type="Gene3D" id="2.60.120.10">
    <property type="entry name" value="Jelly Rolls"/>
    <property type="match status" value="1"/>
</dbReference>
<dbReference type="HAMAP" id="MF_00825">
    <property type="entry name" value="3_HAO"/>
    <property type="match status" value="1"/>
</dbReference>
<dbReference type="InterPro" id="IPR010329">
    <property type="entry name" value="3hydroanth_dOase"/>
</dbReference>
<dbReference type="InterPro" id="IPR014710">
    <property type="entry name" value="RmlC-like_jellyroll"/>
</dbReference>
<dbReference type="InterPro" id="IPR011051">
    <property type="entry name" value="RmlC_Cupin_sf"/>
</dbReference>
<dbReference type="NCBIfam" id="TIGR03037">
    <property type="entry name" value="anthran_nbaC"/>
    <property type="match status" value="1"/>
</dbReference>
<dbReference type="PANTHER" id="PTHR15497">
    <property type="entry name" value="3-HYDROXYANTHRANILATE 3,4-DIOXYGENASE"/>
    <property type="match status" value="1"/>
</dbReference>
<dbReference type="PANTHER" id="PTHR15497:SF1">
    <property type="entry name" value="3-HYDROXYANTHRANILATE 3,4-DIOXYGENASE"/>
    <property type="match status" value="1"/>
</dbReference>
<dbReference type="Pfam" id="PF06052">
    <property type="entry name" value="3-HAO"/>
    <property type="match status" value="1"/>
</dbReference>
<dbReference type="SUPFAM" id="SSF51182">
    <property type="entry name" value="RmlC-like cupins"/>
    <property type="match status" value="1"/>
</dbReference>
<comment type="function">
    <text evidence="1">Catalyzes the oxidative ring opening of 3-hydroxyanthranilate to 2-amino-3-carboxymuconate semialdehyde, which spontaneously cyclizes to quinolinate.</text>
</comment>
<comment type="catalytic activity">
    <reaction evidence="1">
        <text>3-hydroxyanthranilate + O2 = (2Z,4Z)-2-amino-3-carboxymuconate 6-semialdehyde</text>
        <dbReference type="Rhea" id="RHEA:17953"/>
        <dbReference type="ChEBI" id="CHEBI:15379"/>
        <dbReference type="ChEBI" id="CHEBI:36559"/>
        <dbReference type="ChEBI" id="CHEBI:77612"/>
        <dbReference type="EC" id="1.13.11.6"/>
    </reaction>
</comment>
<comment type="cofactor">
    <cofactor evidence="1">
        <name>Fe(2+)</name>
        <dbReference type="ChEBI" id="CHEBI:29033"/>
    </cofactor>
</comment>
<comment type="pathway">
    <text evidence="1">Cofactor biosynthesis; NAD(+) biosynthesis; quinolinate from L-kynurenine: step 3/3.</text>
</comment>
<comment type="subcellular location">
    <subcellularLocation>
        <location evidence="1">Cytoplasm</location>
    </subcellularLocation>
</comment>
<comment type="similarity">
    <text evidence="1">Belongs to the 3-HAO family.</text>
</comment>